<reference key="1">
    <citation type="journal article" date="2003" name="J. Bacteriol.">
        <title>Comparative analyses of the complete genome sequences of Pierce's disease and citrus variegated chlorosis strains of Xylella fastidiosa.</title>
        <authorList>
            <person name="Van Sluys M.A."/>
            <person name="de Oliveira M.C."/>
            <person name="Monteiro-Vitorello C.B."/>
            <person name="Miyaki C.Y."/>
            <person name="Furlan L.R."/>
            <person name="Camargo L.E.A."/>
            <person name="da Silva A.C.R."/>
            <person name="Moon D.H."/>
            <person name="Takita M.A."/>
            <person name="Lemos E.G.M."/>
            <person name="Machado M.A."/>
            <person name="Ferro M.I.T."/>
            <person name="da Silva F.R."/>
            <person name="Goldman M.H.S."/>
            <person name="Goldman G.H."/>
            <person name="Lemos M.V.F."/>
            <person name="El-Dorry H."/>
            <person name="Tsai S.M."/>
            <person name="Carrer H."/>
            <person name="Carraro D.M."/>
            <person name="de Oliveira R.C."/>
            <person name="Nunes L.R."/>
            <person name="Siqueira W.J."/>
            <person name="Coutinho L.L."/>
            <person name="Kimura E.T."/>
            <person name="Ferro E.S."/>
            <person name="Harakava R."/>
            <person name="Kuramae E.E."/>
            <person name="Marino C.L."/>
            <person name="Giglioti E."/>
            <person name="Abreu I.L."/>
            <person name="Alves L.M.C."/>
            <person name="do Amaral A.M."/>
            <person name="Baia G.S."/>
            <person name="Blanco S.R."/>
            <person name="Brito M.S."/>
            <person name="Cannavan F.S."/>
            <person name="Celestino A.V."/>
            <person name="da Cunha A.F."/>
            <person name="Fenille R.C."/>
            <person name="Ferro J.A."/>
            <person name="Formighieri E.F."/>
            <person name="Kishi L.T."/>
            <person name="Leoni S.G."/>
            <person name="Oliveira A.R."/>
            <person name="Rosa V.E. Jr."/>
            <person name="Sassaki F.T."/>
            <person name="Sena J.A.D."/>
            <person name="de Souza A.A."/>
            <person name="Truffi D."/>
            <person name="Tsukumo F."/>
            <person name="Yanai G.M."/>
            <person name="Zaros L.G."/>
            <person name="Civerolo E.L."/>
            <person name="Simpson A.J.G."/>
            <person name="Almeida N.F. Jr."/>
            <person name="Setubal J.C."/>
            <person name="Kitajima J.P."/>
        </authorList>
    </citation>
    <scope>NUCLEOTIDE SEQUENCE [LARGE SCALE GENOMIC DNA]</scope>
    <source>
        <strain>Temecula1 / ATCC 700964</strain>
    </source>
</reference>
<organism>
    <name type="scientific">Xylella fastidiosa (strain Temecula1 / ATCC 700964)</name>
    <dbReference type="NCBI Taxonomy" id="183190"/>
    <lineage>
        <taxon>Bacteria</taxon>
        <taxon>Pseudomonadati</taxon>
        <taxon>Pseudomonadota</taxon>
        <taxon>Gammaproteobacteria</taxon>
        <taxon>Lysobacterales</taxon>
        <taxon>Lysobacteraceae</taxon>
        <taxon>Xylella</taxon>
    </lineage>
</organism>
<gene>
    <name type="primary">lolC</name>
    <name type="ordered locus">PD_0356</name>
</gene>
<name>LOLC_XYLFT</name>
<sequence length="413" mass="45234">MFNPLSVAIGLRYLRAKRRNGFISFISMASILGIALGVTVLITTLAVMSGFQKEIRDRLLQMSAHATVSAQGAPMHDWQHAVALAMTDPRVAGAAPYIESEALLQGERHQPAMMRGIVPNQETKVSVLAQKLKVGSIDSLKPGEYNILLGKELALWLGVDVGDSVIVLLSQTQTTPVGTMPRMKRFTVSGLFEVGYNEIDRGLAVVNMEDMQKIMRMDGVTGVRLKLHDMDHAWDVASDLAVRLNGPYLVSDWTRENANLYSSLKMEKTVMGILLSLIIAMGAFNLVSSQVMLVTDKQADIAILRTLGLSPAGVMRVFMVQGSLIGIIGTLSGVIGGVVLTWNLERILKLIESTFNITLLPEDVYYITGLPTDMQFPDVVVITLMALAMSFIATLYPAWRAARIQPAEALRYE</sequence>
<feature type="chain" id="PRO_0000201817" description="Lipoprotein-releasing system transmembrane protein LolC">
    <location>
        <begin position="1"/>
        <end position="413"/>
    </location>
</feature>
<feature type="transmembrane region" description="Helical" evidence="2">
    <location>
        <begin position="22"/>
        <end position="42"/>
    </location>
</feature>
<feature type="transmembrane region" description="Helical" evidence="2">
    <location>
        <begin position="269"/>
        <end position="289"/>
    </location>
</feature>
<feature type="transmembrane region" description="Helical" evidence="2">
    <location>
        <begin position="322"/>
        <end position="342"/>
    </location>
</feature>
<feature type="transmembrane region" description="Helical" evidence="2">
    <location>
        <begin position="379"/>
        <end position="399"/>
    </location>
</feature>
<keyword id="KW-0997">Cell inner membrane</keyword>
<keyword id="KW-1003">Cell membrane</keyword>
<keyword id="KW-0472">Membrane</keyword>
<keyword id="KW-1185">Reference proteome</keyword>
<keyword id="KW-0812">Transmembrane</keyword>
<keyword id="KW-1133">Transmembrane helix</keyword>
<keyword id="KW-0813">Transport</keyword>
<protein>
    <recommendedName>
        <fullName>Lipoprotein-releasing system transmembrane protein LolC</fullName>
    </recommendedName>
</protein>
<proteinExistence type="inferred from homology"/>
<evidence type="ECO:0000250" key="1"/>
<evidence type="ECO:0000255" key="2"/>
<evidence type="ECO:0000305" key="3"/>
<comment type="function">
    <text evidence="1">Part of an ATP-dependent transport system responsible for the release of lipoproteins targeted to the outer membrane from the inner membrane. Such a release is dependent of the sorting-signal (absence of an Asp at position 2 of the mature lipoprotein) and of LolA (By similarity).</text>
</comment>
<comment type="subcellular location">
    <subcellularLocation>
        <location evidence="1">Cell inner membrane</location>
        <topology evidence="1">Multi-pass membrane protein</topology>
    </subcellularLocation>
</comment>
<comment type="similarity">
    <text evidence="3">Belongs to the ABC-4 integral membrane protein family. LolC/E subfamily.</text>
</comment>
<dbReference type="EMBL" id="AE009442">
    <property type="protein sequence ID" value="AAO28236.1"/>
    <property type="molecule type" value="Genomic_DNA"/>
</dbReference>
<dbReference type="RefSeq" id="WP_004089276.1">
    <property type="nucleotide sequence ID" value="NC_004556.1"/>
</dbReference>
<dbReference type="SMR" id="Q87EF5"/>
<dbReference type="KEGG" id="xft:PD_0356"/>
<dbReference type="HOGENOM" id="CLU_000604_8_1_6"/>
<dbReference type="Proteomes" id="UP000002516">
    <property type="component" value="Chromosome"/>
</dbReference>
<dbReference type="GO" id="GO:0098797">
    <property type="term" value="C:plasma membrane protein complex"/>
    <property type="evidence" value="ECO:0007669"/>
    <property type="project" value="TreeGrafter"/>
</dbReference>
<dbReference type="GO" id="GO:0044874">
    <property type="term" value="P:lipoprotein localization to outer membrane"/>
    <property type="evidence" value="ECO:0007669"/>
    <property type="project" value="TreeGrafter"/>
</dbReference>
<dbReference type="GO" id="GO:0042953">
    <property type="term" value="P:lipoprotein transport"/>
    <property type="evidence" value="ECO:0007669"/>
    <property type="project" value="InterPro"/>
</dbReference>
<dbReference type="InterPro" id="IPR003838">
    <property type="entry name" value="ABC3_permease_C"/>
</dbReference>
<dbReference type="InterPro" id="IPR051447">
    <property type="entry name" value="Lipoprotein-release_system"/>
</dbReference>
<dbReference type="InterPro" id="IPR011925">
    <property type="entry name" value="LolCE_TM"/>
</dbReference>
<dbReference type="InterPro" id="IPR025857">
    <property type="entry name" value="MacB_PCD"/>
</dbReference>
<dbReference type="NCBIfam" id="TIGR02212">
    <property type="entry name" value="lolCE"/>
    <property type="match status" value="1"/>
</dbReference>
<dbReference type="PANTHER" id="PTHR30489">
    <property type="entry name" value="LIPOPROTEIN-RELEASING SYSTEM TRANSMEMBRANE PROTEIN LOLE"/>
    <property type="match status" value="1"/>
</dbReference>
<dbReference type="PANTHER" id="PTHR30489:SF0">
    <property type="entry name" value="LIPOPROTEIN-RELEASING SYSTEM TRANSMEMBRANE PROTEIN LOLE"/>
    <property type="match status" value="1"/>
</dbReference>
<dbReference type="Pfam" id="PF02687">
    <property type="entry name" value="FtsX"/>
    <property type="match status" value="1"/>
</dbReference>
<dbReference type="Pfam" id="PF12704">
    <property type="entry name" value="MacB_PCD"/>
    <property type="match status" value="1"/>
</dbReference>
<accession>Q87EF5</accession>